<protein>
    <recommendedName>
        <fullName>Palladin</fullName>
    </recommendedName>
</protein>
<organism>
    <name type="scientific">Mus musculus</name>
    <name type="common">Mouse</name>
    <dbReference type="NCBI Taxonomy" id="10090"/>
    <lineage>
        <taxon>Eukaryota</taxon>
        <taxon>Metazoa</taxon>
        <taxon>Chordata</taxon>
        <taxon>Craniata</taxon>
        <taxon>Vertebrata</taxon>
        <taxon>Euteleostomi</taxon>
        <taxon>Mammalia</taxon>
        <taxon>Eutheria</taxon>
        <taxon>Euarchontoglires</taxon>
        <taxon>Glires</taxon>
        <taxon>Rodentia</taxon>
        <taxon>Myomorpha</taxon>
        <taxon>Muroidea</taxon>
        <taxon>Muridae</taxon>
        <taxon>Murinae</taxon>
        <taxon>Mus</taxon>
        <taxon>Mus</taxon>
    </lineage>
</organism>
<feature type="chain" id="PRO_0000302721" description="Palladin">
    <location>
        <begin position="1"/>
        <end position="1408"/>
    </location>
</feature>
<feature type="domain" description="Ig-like C2-type 1">
    <location>
        <begin position="278"/>
        <end position="367"/>
    </location>
</feature>
<feature type="domain" description="Ig-like C2-type 2">
    <location>
        <begin position="448"/>
        <end position="546"/>
    </location>
</feature>
<feature type="domain" description="Ig-like C2-type 3">
    <location>
        <begin position="1026"/>
        <end position="1110"/>
    </location>
</feature>
<feature type="domain" description="Ig-like C2-type 4">
    <location>
        <begin position="1160"/>
        <end position="1251"/>
    </location>
</feature>
<feature type="domain" description="Ig-like C2-type 5">
    <location>
        <begin position="1259"/>
        <end position="1349"/>
    </location>
</feature>
<feature type="region of interest" description="Disordered" evidence="5">
    <location>
        <begin position="69"/>
        <end position="229"/>
    </location>
</feature>
<feature type="region of interest" description="Interaction with VASP" evidence="8">
    <location>
        <begin position="569"/>
        <end position="573"/>
    </location>
</feature>
<feature type="region of interest" description="Disordered" evidence="5">
    <location>
        <begin position="631"/>
        <end position="660"/>
    </location>
</feature>
<feature type="region of interest" description="Interaction with LASP1">
    <location>
        <begin position="653"/>
        <end position="683"/>
    </location>
</feature>
<feature type="region of interest" description="Interaction with SORBS2, SPIN90 and SRC" evidence="1">
    <location>
        <begin position="683"/>
        <end position="713"/>
    </location>
</feature>
<feature type="region of interest" description="Disordered" evidence="5">
    <location>
        <begin position="687"/>
        <end position="727"/>
    </location>
</feature>
<feature type="region of interest" description="Disordered" evidence="5">
    <location>
        <begin position="758"/>
        <end position="854"/>
    </location>
</feature>
<feature type="region of interest" description="Interaction with EPS8" evidence="11">
    <location>
        <begin position="782"/>
        <end position="842"/>
    </location>
</feature>
<feature type="region of interest" description="Interaction with SORBS2, SPIN90, SRC and PFN1" evidence="1">
    <location>
        <begin position="807"/>
        <end position="842"/>
    </location>
</feature>
<feature type="region of interest" description="Interaction with VASP" evidence="8">
    <location>
        <begin position="830"/>
        <end position="834"/>
    </location>
</feature>
<feature type="region of interest" description="Disordered" evidence="5">
    <location>
        <begin position="882"/>
        <end position="904"/>
    </location>
</feature>
<feature type="region of interest" description="Disordered" evidence="5">
    <location>
        <begin position="960"/>
        <end position="981"/>
    </location>
</feature>
<feature type="region of interest" description="Disordered" evidence="5">
    <location>
        <begin position="1121"/>
        <end position="1150"/>
    </location>
</feature>
<feature type="region of interest" description="Interaction with EZR" evidence="1">
    <location>
        <begin position="1162"/>
        <end position="1251"/>
    </location>
</feature>
<feature type="region of interest" description="Interaction with EZR" evidence="1">
    <location>
        <begin position="1261"/>
        <end position="1351"/>
    </location>
</feature>
<feature type="compositionally biased region" description="Polar residues" evidence="5">
    <location>
        <begin position="149"/>
        <end position="169"/>
    </location>
</feature>
<feature type="compositionally biased region" description="Polar residues" evidence="5">
    <location>
        <begin position="193"/>
        <end position="229"/>
    </location>
</feature>
<feature type="compositionally biased region" description="Low complexity" evidence="5">
    <location>
        <begin position="691"/>
        <end position="701"/>
    </location>
</feature>
<feature type="compositionally biased region" description="Pro residues" evidence="5">
    <location>
        <begin position="702"/>
        <end position="714"/>
    </location>
</feature>
<feature type="compositionally biased region" description="Low complexity" evidence="5">
    <location>
        <begin position="765"/>
        <end position="779"/>
    </location>
</feature>
<feature type="compositionally biased region" description="Pro residues" evidence="5">
    <location>
        <begin position="780"/>
        <end position="797"/>
    </location>
</feature>
<feature type="compositionally biased region" description="Pro residues" evidence="5">
    <location>
        <begin position="807"/>
        <end position="818"/>
    </location>
</feature>
<feature type="compositionally biased region" description="Pro residues" evidence="5">
    <location>
        <begin position="828"/>
        <end position="840"/>
    </location>
</feature>
<feature type="compositionally biased region" description="Low complexity" evidence="5">
    <location>
        <begin position="1123"/>
        <end position="1133"/>
    </location>
</feature>
<feature type="modified residue" description="Phosphoserine" evidence="19">
    <location>
        <position position="194"/>
    </location>
</feature>
<feature type="modified residue" description="Phosphoserine" evidence="19">
    <location>
        <position position="639"/>
    </location>
</feature>
<feature type="modified residue" description="Phosphothreonine" evidence="19">
    <location>
        <position position="642"/>
    </location>
</feature>
<feature type="modified residue" description="Phosphoserine" evidence="3">
    <location>
        <position position="648"/>
    </location>
</feature>
<feature type="modified residue" description="Phosphoserine" evidence="3">
    <location>
        <position position="700"/>
    </location>
</feature>
<feature type="modified residue" description="Phosphoserine" evidence="3">
    <location>
        <position position="704"/>
    </location>
</feature>
<feature type="modified residue" description="Phosphoserine" evidence="3">
    <location>
        <position position="744"/>
    </location>
</feature>
<feature type="modified residue" description="Phosphoserine" evidence="18 19">
    <location>
        <position position="901"/>
    </location>
</feature>
<feature type="modified residue" description="Phosphoserine" evidence="19">
    <location>
        <position position="1004"/>
    </location>
</feature>
<feature type="modified residue" description="Phosphoserine" evidence="19">
    <location>
        <position position="1009"/>
    </location>
</feature>
<feature type="modified residue" description="Phosphoserine" evidence="3">
    <location>
        <position position="1126"/>
    </location>
</feature>
<feature type="modified residue" description="Phosphoserine" evidence="3">
    <location>
        <position position="1129"/>
    </location>
</feature>
<feature type="modified residue" description="Phosphoserine" evidence="3">
    <location>
        <position position="1131"/>
    </location>
</feature>
<feature type="modified residue" description="Phosphoserine" evidence="19">
    <location>
        <position position="1141"/>
    </location>
</feature>
<feature type="modified residue" description="Phosphoserine; by PKB/AKT1" evidence="18">
    <location>
        <position position="1143"/>
    </location>
</feature>
<feature type="modified residue" description="Phosphoserine" evidence="18 19">
    <location>
        <position position="1146"/>
    </location>
</feature>
<feature type="modified residue" description="Phosphoserine" evidence="3">
    <location>
        <position position="1377"/>
    </location>
</feature>
<feature type="disulfide bond" evidence="4">
    <location>
        <begin position="299"/>
        <end position="351"/>
    </location>
</feature>
<feature type="disulfide bond" evidence="4">
    <location>
        <begin position="469"/>
        <end position="528"/>
    </location>
</feature>
<feature type="disulfide bond" evidence="4">
    <location>
        <begin position="1181"/>
        <end position="1233"/>
    </location>
</feature>
<feature type="splice variant" id="VSP_027931" description="In isoform 5." evidence="16">
    <location>
        <begin position="1"/>
        <end position="738"/>
    </location>
</feature>
<feature type="splice variant" id="VSP_027932" description="In isoform 3." evidence="17">
    <location>
        <begin position="1"/>
        <end position="728"/>
    </location>
</feature>
<feature type="splice variant" id="VSP_027933" description="In isoform 4." evidence="17">
    <location>
        <begin position="1"/>
        <end position="389"/>
    </location>
</feature>
<feature type="splice variant" id="VSP_027934" description="In isoform 2." evidence="17">
    <location>
        <begin position="663"/>
        <end position="887"/>
    </location>
</feature>
<feature type="splice variant" id="VSP_027935" description="In isoform 2, isoform 3, isoform 4 and isoform 6." evidence="14 15 16">
    <location>
        <begin position="966"/>
        <end position="982"/>
    </location>
</feature>
<feature type="splice variant" id="VSP_027936" description="In isoform 2." evidence="17">
    <original>TQWHQQPQTTKPKKVRPSASRYAALSDQGLDIKAAFQPEASPSHLTLNSGLVESEDL</original>
    <variation>ISRH</variation>
    <location>
        <begin position="1352"/>
        <end position="1408"/>
    </location>
</feature>
<feature type="sequence conflict" description="In Ref. 5; AK031696." evidence="17" ref="5">
    <original>N</original>
    <variation>K</variation>
    <location>
        <position position="1022"/>
    </location>
</feature>
<feature type="sequence conflict" description="In Ref. 5; AK031696." evidence="17" ref="5">
    <original>P</original>
    <variation>T</variation>
    <location>
        <position position="1053"/>
    </location>
</feature>
<feature type="strand" evidence="20">
    <location>
        <begin position="1035"/>
        <end position="1038"/>
    </location>
</feature>
<feature type="strand" evidence="20">
    <location>
        <begin position="1043"/>
        <end position="1048"/>
    </location>
</feature>
<feature type="strand" evidence="20">
    <location>
        <begin position="1058"/>
        <end position="1061"/>
    </location>
</feature>
<feature type="strand" evidence="20">
    <location>
        <begin position="1071"/>
        <end position="1077"/>
    </location>
</feature>
<feature type="strand" evidence="20">
    <location>
        <begin position="1081"/>
        <end position="1089"/>
    </location>
</feature>
<feature type="turn" evidence="20">
    <location>
        <begin position="1092"/>
        <end position="1094"/>
    </location>
</feature>
<feature type="strand" evidence="20">
    <location>
        <begin position="1096"/>
        <end position="1101"/>
    </location>
</feature>
<feature type="strand" evidence="20">
    <location>
        <begin position="1114"/>
        <end position="1118"/>
    </location>
</feature>
<comment type="function">
    <text evidence="6 9 10 12">Cytoskeletal protein required for organization of normal actin cytoskeleton. Roles in establishing cell morphology, motility, cell adhesion and cell-extracellular matrix interactions in a variety of cell types. May function as a scaffolding molecule with the potential to influence both actin polymerization and the assembly of existing actin filaments into higher-order arrays. Binds to proteins that bind to either monomeric or filamentous actin. Localizes at sites where active actin remodeling takes place, such as lamellipodia and membrane ruffles. Different isoforms may have functional differences. Involved in the control of morphological and cytoskeletal changes associated with dendritic cell maturation. Involved in targeting ACTN to specific subcellular locations. May be required for the initiation of neural tube closure.</text>
</comment>
<comment type="subunit">
    <text evidence="2 3 8 10 11">Interacts with EPS8 (PubMed:16868024). Interacts with LASP1 (PubMed:16492705). Interacts with VASP (PubMed:14983521). Interacts with ACTN (By similarity). Interacts with SORBS2 (By similarity). Interacts with PFN1 (By similarity). Interacts with LPP (By similarity). Interacts with SPIN90 (By similarity). Interacts with SRC (By similarity). Interacts with EZR (By similarity). Interacts with RAI14 (By similarity).</text>
</comment>
<comment type="subcellular location">
    <subcellularLocation>
        <location evidence="6">Cytoplasm</location>
        <location evidence="6">Cytoskeleton</location>
    </subcellularLocation>
    <subcellularLocation>
        <location evidence="6">Cell junction</location>
        <location evidence="6">Focal adhesion</location>
    </subcellularLocation>
    <subcellularLocation>
        <location evidence="6">Cytoplasm</location>
        <location evidence="6">Myofibril</location>
        <location evidence="6">Sarcomere</location>
        <location evidence="6">Z line</location>
    </subcellularLocation>
    <subcellularLocation>
        <location evidence="3">Cell projection</location>
        <location evidence="3">Ruffle</location>
    </subcellularLocation>
    <subcellularLocation>
        <location evidence="2">Cell projection</location>
        <location evidence="2">Podosome</location>
    </subcellularLocation>
    <subcellularLocation>
        <location evidence="3">Cell projection</location>
        <location evidence="3">Lamellipodium</location>
    </subcellularLocation>
    <subcellularLocation>
        <location evidence="2">Cell projection</location>
        <location evidence="2">Axon</location>
    </subcellularLocation>
    <subcellularLocation>
        <location evidence="2">Cell projection</location>
        <location evidence="2">Growth cone</location>
    </subcellularLocation>
    <text evidence="2 6">Localizes to stress fibers and Z lines (PubMed:10931874). Preferentially expressed in the excitatory presynaptic terminals (By similarity).</text>
</comment>
<comment type="alternative products">
    <event type="alternative splicing"/>
    <isoform>
        <id>Q9ET54-1</id>
        <name>1</name>
        <name>200 kDa isoform</name>
        <sequence type="displayed"/>
    </isoform>
    <isoform>
        <id>Q9ET54-2</id>
        <name>2</name>
        <sequence type="described" ref="VSP_027934 VSP_027935 VSP_027936"/>
    </isoform>
    <isoform>
        <id>Q9ET54-3</id>
        <name>3</name>
        <name>90 kDa isoform</name>
        <name>3Ig isoform</name>
        <sequence type="described" ref="VSP_027932 VSP_027935"/>
    </isoform>
    <isoform>
        <id>Q9ET54-4</id>
        <name>4</name>
        <name>140 kDa isoform</name>
        <name>4Ig isoform</name>
        <sequence type="described" ref="VSP_027933 VSP_027935"/>
    </isoform>
    <isoform>
        <id>Q9ET54-5</id>
        <name>5</name>
        <sequence type="described" ref="VSP_027931"/>
    </isoform>
    <isoform>
        <id>Q9ET54-6</id>
        <name>6</name>
        <sequence type="described" ref="VSP_027935"/>
    </isoform>
</comment>
<comment type="tissue specificity">
    <text evidence="6 7">Detected in both muscle and non-muscle tissues and cells (at protein level). Isoform 3 is widely expressed, isoform 4 is particularly abundant in tissues rich in smooth muscle and in the cardiac muscle and isoform 1 is detected in heart.</text>
</comment>
<comment type="developmental stage">
    <text evidence="6 9">Ubiquitously detected in embryonic tissues, and down-regulated in certain adult tissues (at protein level). Isoform 3 is widely expressed in embryonic tissues (at protein level). In adults is detected in spleen and gut, and is almost undetectable in heart, skeletal muscle, liver, and kidney (at protein level). Isoform 4 is widely expressed in neonatal tissues (brain, heart, lung, stomach, intestine, kidney, bone and skin) (at protein level). Late in development expression is restricted to cardiac muscle and to organs rich in smooth muscle (at protein level). Isoform 1 is detected in neonatal striated muscle and bone, and remains highly expressed in adult skeletal and cardiac muscle (at protein level). Adult brain express an isoform of 80-85 kDa. At 8.5 dpc is mainly expressed the rostral and caudal part of neural plate. No expression is detected in somite. At 9.5 dpc and 10.5 dpc is ubiquitously detected.</text>
</comment>
<comment type="PTM">
    <text evidence="1">Phosphorylated predominantly on serines and, to a lesser extent, on tyrosines. Phosphorylation at Ser-1143 by PKB/AKT1 modulates cytoskeletal organization and cell motility (By similarity).</text>
</comment>
<comment type="disruption phenotype">
    <text evidence="9 12 13">Death around 15.5 dpc due to severe neural tube closure defects and herniation of liver and intestine. Palld-deficient mouse embryonic fibroblasts display disorganized actin cytoskeleton, decreased polymerized filament actin, and decreased cell adhesion and compromised cell spreading on various extracellular matrix. Mice embryos lacking Palld exhibit defects in erythropoiesis.</text>
</comment>
<comment type="similarity">
    <text evidence="17">Belongs to the myotilin/palladin family.</text>
</comment>
<comment type="sequence caution" evidence="17">
    <conflict type="frameshift">
        <sequence resource="EMBL" id="AK031696"/>
    </conflict>
</comment>
<comment type="sequence caution" evidence="17">
    <conflict type="erroneous initiation">
        <sequence resource="EMBL-CDS" id="BAB26871"/>
    </conflict>
</comment>
<keyword id="KW-0002">3D-structure</keyword>
<keyword id="KW-0009">Actin-binding</keyword>
<keyword id="KW-0025">Alternative splicing</keyword>
<keyword id="KW-0965">Cell junction</keyword>
<keyword id="KW-0966">Cell projection</keyword>
<keyword id="KW-0963">Cytoplasm</keyword>
<keyword id="KW-0206">Cytoskeleton</keyword>
<keyword id="KW-1015">Disulfide bond</keyword>
<keyword id="KW-0393">Immunoglobulin domain</keyword>
<keyword id="KW-0597">Phosphoprotein</keyword>
<keyword id="KW-1185">Reference proteome</keyword>
<keyword id="KW-0677">Repeat</keyword>
<sequence>MSETSSHDSFYDSLSDVQEEGKSADFFPGLSAFLSQEEINKSLDLARRAIDSSETEDFDSEKEISQIFSKSPISLCETPSHEEPKSGKQTSSERPQDSRRAPVQPLTGDQAERITSPGSKRKPGVSPLLASPSYIRSLRKAEKRGAKNPNPSSKPKTAQQSKAGPQSQLCDKAASFIEELTSIFREAAKPRNRSPNGESSSPDSGYLSPKNQPSALMSASASQSPTADQLDQLEMDAEVKQAQGSLCYQAHQASEETLPLAHIPHPQPQKARHLPTAPRFIQKLRSQEVAEGSRVYLECRVTGNPTPRVRWFCEGKELYNSPDVQIHCESGELHTLVIAEAFEDDTGRYTCLATNPSGSDSTSAEVFIEGASSTDSDSESLSFISKAGAMPQAQKKTTSVSLTIGSSAPKTGVTTAVIQPLSVPVQQAHSATSYLCRPDGTTMGCLLPVFTKELQNTAASEGQVVVLECRVRGAPPLQVQWFRQGSEIQDSPDFRILQKKPRSTAEPEEICTLVIAESFPEDAGIFTCSATNDYGSVTSTAQLVITSANNENCSYDSTGEPNSDHFQHFPPPPPILETGSYELASQKPSEIQQVNSPNLGFSMAALQMQFNTAERETNGVHPSHGVNGLINGKAYGNKSPPTPTALLSPTKEPPPLLAKPKLDPLKLQQLQNQVRLEQEACAWPPAPPGVPCNSSSSGSSAPPSPPFPPPPPAFPELAACASPVPSEPMSALASRATAMQSSGSFNYARPKQFIAAQNLGPASGLPTPTSSPSSSSLPSPLSPTPRPFGRAPGPPFVEPEAMWGPSSPSPPPPPPPVFSPSAAYPVPDVFPLPPPPPPLPSSTSHCASPARFGPSQTPAAFLSALLPSQPPPVAVNALGLPKGVTPAGFPKKSSRTARIASDEEIQGTKDAVIQDLERKLRFKEDLLNNGQPRLTYEERMARRLLGADSANVFNIQEPEETAANQDAGAPRASVGGPLDGQKEYKVSSCEQRLISEIEYRLERSPVDESGDEVQDPDVPVENATAPFFEMKLKHYKIFEGMPVTFTCRVAGNPKPKIYWFKDGKQISPKSDHYTIQRDLDGTCSLHTTASTLDDDGNYTIMAANPQGRVSCTGRLMVQAVNQRGRSPRSPSGHPHARRPRSRSRDSGDENEPIQERFFRPHFLQAPGDLTVQEGKLCRMDCKVSGLPTPDLSWQLDGKPIRPDSAHKMLVRENGVHSLIIEPVTSRDAGIYTCIATNRAGQNSFNLELVVAAKEAHKAPVFMEKLQNTGVADGYPVRLECRVSGVPPPQIFWKKENESLTHSTERVSMHQDNHGYICLLIQGATKEDAGWYTVSAKNEAGIVSCTARLDVYTQWHQQPQTTKPKKVRPSASRYAALSDQGLDIKAAFQPEASPSHLTLNSGLVESEDL</sequence>
<name>PALLD_MOUSE</name>
<accession>Q9ET54</accession>
<accession>A0JNZ3</accession>
<accession>Q69ZT7</accession>
<accession>Q6DFX7</accession>
<accession>Q9CWW1</accession>
<reference key="1">
    <citation type="journal article" date="2009" name="PLoS Biol.">
        <title>Lineage-specific biology revealed by a finished genome assembly of the mouse.</title>
        <authorList>
            <person name="Church D.M."/>
            <person name="Goodstadt L."/>
            <person name="Hillier L.W."/>
            <person name="Zody M.C."/>
            <person name="Goldstein S."/>
            <person name="She X."/>
            <person name="Bult C.J."/>
            <person name="Agarwala R."/>
            <person name="Cherry J.L."/>
            <person name="DiCuccio M."/>
            <person name="Hlavina W."/>
            <person name="Kapustin Y."/>
            <person name="Meric P."/>
            <person name="Maglott D."/>
            <person name="Birtle Z."/>
            <person name="Marques A.C."/>
            <person name="Graves T."/>
            <person name="Zhou S."/>
            <person name="Teague B."/>
            <person name="Potamousis K."/>
            <person name="Churas C."/>
            <person name="Place M."/>
            <person name="Herschleb J."/>
            <person name="Runnheim R."/>
            <person name="Forrest D."/>
            <person name="Amos-Landgraf J."/>
            <person name="Schwartz D.C."/>
            <person name="Cheng Z."/>
            <person name="Lindblad-Toh K."/>
            <person name="Eichler E.E."/>
            <person name="Ponting C.P."/>
        </authorList>
    </citation>
    <scope>NUCLEOTIDE SEQUENCE [LARGE SCALE GENOMIC DNA]</scope>
    <source>
        <strain>C57BL/6J</strain>
    </source>
</reference>
<reference key="2">
    <citation type="journal article" date="2004" name="Genome Res.">
        <title>The status, quality, and expansion of the NIH full-length cDNA project: the Mammalian Gene Collection (MGC).</title>
        <authorList>
            <consortium name="The MGC Project Team"/>
        </authorList>
    </citation>
    <scope>NUCLEOTIDE SEQUENCE [LARGE SCALE MRNA] (ISOFORM 5)</scope>
    <scope>NUCLEOTIDE SEQUENCE [LARGE SCALE MRNA] OF 539-1408 (ISOFORM 6)</scope>
    <source>
        <strain>C57BL/6J</strain>
        <tissue>Eye</tissue>
    </source>
</reference>
<reference key="3">
    <citation type="journal article" date="2004" name="DNA Res.">
        <title>Prediction of the coding sequences of mouse homologues of FLJ genes: the complete nucleotide sequences of 110 mouse FLJ-homologous cDNAs identified by screening of terminal sequences of cDNA clones randomly sampled from size-fractionated libraries.</title>
        <authorList>
            <person name="Okazaki N."/>
            <person name="Kikuno R."/>
            <person name="Ohara R."/>
            <person name="Inamoto S."/>
            <person name="Koseki H."/>
            <person name="Hiraoka S."/>
            <person name="Saga Y."/>
            <person name="Kitamura H."/>
            <person name="Nakagawa T."/>
            <person name="Nagase T."/>
            <person name="Ohara O."/>
            <person name="Koga H."/>
        </authorList>
    </citation>
    <scope>NUCLEOTIDE SEQUENCE [LARGE SCALE MRNA] OF 311-1408 (ISOFORM 6)</scope>
    <source>
        <tissue>Embryonic tail</tissue>
    </source>
</reference>
<reference key="4">
    <citation type="journal article" date="2000" name="J. Cell Biol.">
        <title>Characterization of palladin, a novel protein localized to stress fibers and cell adhesions.</title>
        <authorList>
            <person name="Parast M.M."/>
            <person name="Otey C.A."/>
        </authorList>
    </citation>
    <scope>NUCLEOTIDE SEQUENCE [MRNA] OF 900-1408 (ISOFORM 6)</scope>
    <scope>FUNCTION</scope>
    <scope>SUBCELLULAR LOCATION</scope>
    <scope>TISSUE SPECIFICITY</scope>
    <scope>DEVELOPMENTAL STAGE</scope>
    <scope>PHOSPHORYLATION</scope>
    <source>
        <strain>Swiss Webster / NIH</strain>
    </source>
</reference>
<reference key="5">
    <citation type="journal article" date="2005" name="Science">
        <title>The transcriptional landscape of the mammalian genome.</title>
        <authorList>
            <person name="Carninci P."/>
            <person name="Kasukawa T."/>
            <person name="Katayama S."/>
            <person name="Gough J."/>
            <person name="Frith M.C."/>
            <person name="Maeda N."/>
            <person name="Oyama R."/>
            <person name="Ravasi T."/>
            <person name="Lenhard B."/>
            <person name="Wells C."/>
            <person name="Kodzius R."/>
            <person name="Shimokawa K."/>
            <person name="Bajic V.B."/>
            <person name="Brenner S.E."/>
            <person name="Batalov S."/>
            <person name="Forrest A.R."/>
            <person name="Zavolan M."/>
            <person name="Davis M.J."/>
            <person name="Wilming L.G."/>
            <person name="Aidinis V."/>
            <person name="Allen J.E."/>
            <person name="Ambesi-Impiombato A."/>
            <person name="Apweiler R."/>
            <person name="Aturaliya R.N."/>
            <person name="Bailey T.L."/>
            <person name="Bansal M."/>
            <person name="Baxter L."/>
            <person name="Beisel K.W."/>
            <person name="Bersano T."/>
            <person name="Bono H."/>
            <person name="Chalk A.M."/>
            <person name="Chiu K.P."/>
            <person name="Choudhary V."/>
            <person name="Christoffels A."/>
            <person name="Clutterbuck D.R."/>
            <person name="Crowe M.L."/>
            <person name="Dalla E."/>
            <person name="Dalrymple B.P."/>
            <person name="de Bono B."/>
            <person name="Della Gatta G."/>
            <person name="di Bernardo D."/>
            <person name="Down T."/>
            <person name="Engstrom P."/>
            <person name="Fagiolini M."/>
            <person name="Faulkner G."/>
            <person name="Fletcher C.F."/>
            <person name="Fukushima T."/>
            <person name="Furuno M."/>
            <person name="Futaki S."/>
            <person name="Gariboldi M."/>
            <person name="Georgii-Hemming P."/>
            <person name="Gingeras T.R."/>
            <person name="Gojobori T."/>
            <person name="Green R.E."/>
            <person name="Gustincich S."/>
            <person name="Harbers M."/>
            <person name="Hayashi Y."/>
            <person name="Hensch T.K."/>
            <person name="Hirokawa N."/>
            <person name="Hill D."/>
            <person name="Huminiecki L."/>
            <person name="Iacono M."/>
            <person name="Ikeo K."/>
            <person name="Iwama A."/>
            <person name="Ishikawa T."/>
            <person name="Jakt M."/>
            <person name="Kanapin A."/>
            <person name="Katoh M."/>
            <person name="Kawasawa Y."/>
            <person name="Kelso J."/>
            <person name="Kitamura H."/>
            <person name="Kitano H."/>
            <person name="Kollias G."/>
            <person name="Krishnan S.P."/>
            <person name="Kruger A."/>
            <person name="Kummerfeld S.K."/>
            <person name="Kurochkin I.V."/>
            <person name="Lareau L.F."/>
            <person name="Lazarevic D."/>
            <person name="Lipovich L."/>
            <person name="Liu J."/>
            <person name="Liuni S."/>
            <person name="McWilliam S."/>
            <person name="Madan Babu M."/>
            <person name="Madera M."/>
            <person name="Marchionni L."/>
            <person name="Matsuda H."/>
            <person name="Matsuzawa S."/>
            <person name="Miki H."/>
            <person name="Mignone F."/>
            <person name="Miyake S."/>
            <person name="Morris K."/>
            <person name="Mottagui-Tabar S."/>
            <person name="Mulder N."/>
            <person name="Nakano N."/>
            <person name="Nakauchi H."/>
            <person name="Ng P."/>
            <person name="Nilsson R."/>
            <person name="Nishiguchi S."/>
            <person name="Nishikawa S."/>
            <person name="Nori F."/>
            <person name="Ohara O."/>
            <person name="Okazaki Y."/>
            <person name="Orlando V."/>
            <person name="Pang K.C."/>
            <person name="Pavan W.J."/>
            <person name="Pavesi G."/>
            <person name="Pesole G."/>
            <person name="Petrovsky N."/>
            <person name="Piazza S."/>
            <person name="Reed J."/>
            <person name="Reid J.F."/>
            <person name="Ring B.Z."/>
            <person name="Ringwald M."/>
            <person name="Rost B."/>
            <person name="Ruan Y."/>
            <person name="Salzberg S.L."/>
            <person name="Sandelin A."/>
            <person name="Schneider C."/>
            <person name="Schoenbach C."/>
            <person name="Sekiguchi K."/>
            <person name="Semple C.A."/>
            <person name="Seno S."/>
            <person name="Sessa L."/>
            <person name="Sheng Y."/>
            <person name="Shibata Y."/>
            <person name="Shimada H."/>
            <person name="Shimada K."/>
            <person name="Silva D."/>
            <person name="Sinclair B."/>
            <person name="Sperling S."/>
            <person name="Stupka E."/>
            <person name="Sugiura K."/>
            <person name="Sultana R."/>
            <person name="Takenaka Y."/>
            <person name="Taki K."/>
            <person name="Tammoja K."/>
            <person name="Tan S.L."/>
            <person name="Tang S."/>
            <person name="Taylor M.S."/>
            <person name="Tegner J."/>
            <person name="Teichmann S.A."/>
            <person name="Ueda H.R."/>
            <person name="van Nimwegen E."/>
            <person name="Verardo R."/>
            <person name="Wei C.L."/>
            <person name="Yagi K."/>
            <person name="Yamanishi H."/>
            <person name="Zabarovsky E."/>
            <person name="Zhu S."/>
            <person name="Zimmer A."/>
            <person name="Hide W."/>
            <person name="Bult C."/>
            <person name="Grimmond S.M."/>
            <person name="Teasdale R.D."/>
            <person name="Liu E.T."/>
            <person name="Brusic V."/>
            <person name="Quackenbush J."/>
            <person name="Wahlestedt C."/>
            <person name="Mattick J.S."/>
            <person name="Hume D.A."/>
            <person name="Kai C."/>
            <person name="Sasaki D."/>
            <person name="Tomaru Y."/>
            <person name="Fukuda S."/>
            <person name="Kanamori-Katayama M."/>
            <person name="Suzuki M."/>
            <person name="Aoki J."/>
            <person name="Arakawa T."/>
            <person name="Iida J."/>
            <person name="Imamura K."/>
            <person name="Itoh M."/>
            <person name="Kato T."/>
            <person name="Kawaji H."/>
            <person name="Kawagashira N."/>
            <person name="Kawashima T."/>
            <person name="Kojima M."/>
            <person name="Kondo S."/>
            <person name="Konno H."/>
            <person name="Nakano K."/>
            <person name="Ninomiya N."/>
            <person name="Nishio T."/>
            <person name="Okada M."/>
            <person name="Plessy C."/>
            <person name="Shibata K."/>
            <person name="Shiraki T."/>
            <person name="Suzuki S."/>
            <person name="Tagami M."/>
            <person name="Waki K."/>
            <person name="Watahiki A."/>
            <person name="Okamura-Oho Y."/>
            <person name="Suzuki H."/>
            <person name="Kawai J."/>
            <person name="Hayashizaki Y."/>
        </authorList>
    </citation>
    <scope>NUCLEOTIDE SEQUENCE [LARGE SCALE MRNA] OF 1015-1408 (ISOFORM 1)</scope>
    <source>
        <strain>C57BL/6J</strain>
    </source>
</reference>
<reference key="6">
    <citation type="journal article" date="2001" name="J. Comp. Neurol.">
        <title>Palladin is expressed preferentially in excitatory terminals in the rat central nervous system.</title>
        <authorList>
            <person name="Hwang S.J."/>
            <person name="Pagliardini S."/>
            <person name="Boukhelifa M."/>
            <person name="Parast M.M."/>
            <person name="Otey C.A."/>
            <person name="Rustioni A."/>
            <person name="Valtschanoff J.G."/>
        </authorList>
    </citation>
    <scope>TISSUE SPECIFICITY</scope>
</reference>
<reference key="7">
    <citation type="journal article" date="2004" name="Cell Motil. Cytoskeleton">
        <title>Palladin is a novel binding partner for Ena/VASP family members.</title>
        <authorList>
            <person name="Boukhelifa M."/>
            <person name="Parast M.M."/>
            <person name="Bear J.E."/>
            <person name="Gertler F.B."/>
            <person name="Otey C.A."/>
        </authorList>
    </citation>
    <scope>INTERACTION WITH VASP</scope>
</reference>
<reference key="8">
    <citation type="journal article" date="2005" name="Int. Rev. Cytol.">
        <title>The palladin/myotilin/myopalladin family of actin-associated scaffolds.</title>
        <authorList>
            <person name="Otey C.A."/>
            <person name="Rachlin A."/>
            <person name="Moza M."/>
            <person name="Arneman D."/>
            <person name="Carpen O."/>
        </authorList>
    </citation>
    <scope>ALTERNATIVE SPLICING (ISOFORMS 1; 3 AND 4)</scope>
</reference>
<reference key="9">
    <citation type="journal article" date="2005" name="Mol. Cell. Neurosci.">
        <title>Disruption of palladin results in neural tube closure defects in mice.</title>
        <authorList>
            <person name="Luo H."/>
            <person name="Liu X."/>
            <person name="Wang F."/>
            <person name="Huang Q."/>
            <person name="Shen S."/>
            <person name="Wang L."/>
            <person name="Xu G."/>
            <person name="Sun X."/>
            <person name="Kong H."/>
            <person name="Gu M."/>
            <person name="Chen S."/>
            <person name="Chen Z."/>
            <person name="Wang Z."/>
        </authorList>
    </citation>
    <scope>FUNCTION</scope>
    <scope>DEVELOPMENTAL STAGE</scope>
    <scope>DISRUPTION PHENOTYPE</scope>
</reference>
<reference key="10">
    <citation type="journal article" date="2006" name="J. Cell Sci.">
        <title>Identification of palladin isoforms and characterization of an isoform-specific interaction between Lasp-1 and palladin.</title>
        <authorList>
            <person name="Rachlin A.S."/>
            <person name="Otey C.A."/>
        </authorList>
    </citation>
    <scope>FUNCTION</scope>
    <scope>ALTERNATIVE SPLICING (ISOFORMS 3 AND 4)</scope>
    <scope>INTERACTION OF ISOFORM 3 WITH LASP1</scope>
</reference>
<reference key="11">
    <citation type="journal article" date="2006" name="J. Cell Sci.">
        <title>Palladin binds to Eps8 and enhances the formation of dorsal ruffles and podosomes in vascular smooth muscle cells.</title>
        <authorList>
            <person name="Goicoechea S."/>
            <person name="Arneman D."/>
            <person name="Disanza A."/>
            <person name="Garcia-Mata R."/>
            <person name="Scita G."/>
            <person name="Otey C.A."/>
        </authorList>
    </citation>
    <scope>INTERACTION WITH EPS8</scope>
</reference>
<reference key="12">
    <citation type="journal article" date="2007" name="Blood">
        <title>Disruption of palladin leads to defects in definitive erythropoiesis by interfering erythroblastic island formation in mouse fetal liver.</title>
        <authorList>
            <person name="Liu X.-S."/>
            <person name="Li X.-H."/>
            <person name="Wang Y."/>
            <person name="Shu R.-Z."/>
            <person name="Wang L."/>
            <person name="Lu S.-Y."/>
            <person name="Kong H."/>
            <person name="Jin Y.-E."/>
            <person name="Zhang L.-J."/>
            <person name="Fei J."/>
            <person name="Chen S.-J."/>
            <person name="Chen Z."/>
            <person name="Gu M.-M."/>
            <person name="Lu Z.-Y."/>
            <person name="Wang Z.-G."/>
        </authorList>
    </citation>
    <scope>DISRUPTION PHENOTYPE</scope>
</reference>
<reference key="13">
    <citation type="journal article" date="2007" name="J. Cell. Biochem.">
        <title>Palladin regulates cell and extracellular matrix interaction through maintaining normal actin cytoskeleton architecture and stabilizing beta1-integrin.</title>
        <authorList>
            <person name="Liu X.-S."/>
            <person name="Luo H.-J."/>
            <person name="Yang H."/>
            <person name="Wang L."/>
            <person name="Kong H."/>
            <person name="Jin Y.-E."/>
            <person name="Wang F."/>
            <person name="Gu M.-M."/>
            <person name="Chen Z."/>
            <person name="Lu Z.-Y."/>
            <person name="Wang Z.-G."/>
        </authorList>
    </citation>
    <scope>FUNCTION</scope>
    <scope>DISRUPTION PHENOTYPE</scope>
</reference>
<reference key="14">
    <citation type="journal article" date="2007" name="Proc. Natl. Acad. Sci. U.S.A.">
        <title>Large-scale phosphorylation analysis of mouse liver.</title>
        <authorList>
            <person name="Villen J."/>
            <person name="Beausoleil S.A."/>
            <person name="Gerber S.A."/>
            <person name="Gygi S.P."/>
        </authorList>
    </citation>
    <scope>PHOSPHORYLATION [LARGE SCALE ANALYSIS] AT SER-901; SER-1143 AND SER-1146</scope>
    <scope>IDENTIFICATION BY MASS SPECTROMETRY [LARGE SCALE ANALYSIS]</scope>
    <source>
        <tissue>Liver</tissue>
    </source>
</reference>
<reference key="15">
    <citation type="journal article" date="2008" name="J. Proteome Res.">
        <title>Specific phosphopeptide enrichment with immobilized titanium ion affinity chromatography adsorbent for phosphoproteome analysis.</title>
        <authorList>
            <person name="Zhou H."/>
            <person name="Ye M."/>
            <person name="Dong J."/>
            <person name="Han G."/>
            <person name="Jiang X."/>
            <person name="Wu R."/>
            <person name="Zou H."/>
        </authorList>
    </citation>
    <scope>IDENTIFICATION BY MASS SPECTROMETRY [LARGE SCALE ANALYSIS]</scope>
    <source>
        <tissue>Liver</tissue>
    </source>
</reference>
<reference key="16">
    <citation type="journal article" date="2009" name="Mol. Cell. Proteomics">
        <title>Large scale localization of protein phosphorylation by use of electron capture dissociation mass spectrometry.</title>
        <authorList>
            <person name="Sweet S.M."/>
            <person name="Bailey C.M."/>
            <person name="Cunningham D.L."/>
            <person name="Heath J.K."/>
            <person name="Cooper H.J."/>
        </authorList>
    </citation>
    <scope>IDENTIFICATION BY MASS SPECTROMETRY [LARGE SCALE ANALYSIS]</scope>
    <source>
        <tissue>Embryonic fibroblast</tissue>
    </source>
</reference>
<reference key="17">
    <citation type="journal article" date="2010" name="Cell">
        <title>A tissue-specific atlas of mouse protein phosphorylation and expression.</title>
        <authorList>
            <person name="Huttlin E.L."/>
            <person name="Jedrychowski M.P."/>
            <person name="Elias J.E."/>
            <person name="Goswami T."/>
            <person name="Rad R."/>
            <person name="Beausoleil S.A."/>
            <person name="Villen J."/>
            <person name="Haas W."/>
            <person name="Sowa M.E."/>
            <person name="Gygi S.P."/>
        </authorList>
    </citation>
    <scope>PHOSPHORYLATION [LARGE SCALE ANALYSIS] AT SER-194; SER-639; THR-642; SER-901; SER-1004; SER-1009; SER-1141 AND SER-1146</scope>
    <scope>IDENTIFICATION BY MASS SPECTROMETRY [LARGE SCALE ANALYSIS]</scope>
    <source>
        <tissue>Brown adipose tissue</tissue>
        <tissue>Heart</tissue>
        <tissue>Kidney</tissue>
        <tissue>Liver</tissue>
        <tissue>Lung</tissue>
        <tissue>Spleen</tissue>
        <tissue>Testis</tissue>
    </source>
</reference>
<evidence type="ECO:0000250" key="1"/>
<evidence type="ECO:0000250" key="2">
    <source>
        <dbReference type="UniProtKB" id="P0C5E3"/>
    </source>
</evidence>
<evidence type="ECO:0000250" key="3">
    <source>
        <dbReference type="UniProtKB" id="Q8WX93"/>
    </source>
</evidence>
<evidence type="ECO:0000255" key="4">
    <source>
        <dbReference type="PROSITE-ProRule" id="PRU00114"/>
    </source>
</evidence>
<evidence type="ECO:0000256" key="5">
    <source>
        <dbReference type="SAM" id="MobiDB-lite"/>
    </source>
</evidence>
<evidence type="ECO:0000269" key="6">
    <source>
    </source>
</evidence>
<evidence type="ECO:0000269" key="7">
    <source>
    </source>
</evidence>
<evidence type="ECO:0000269" key="8">
    <source>
    </source>
</evidence>
<evidence type="ECO:0000269" key="9">
    <source>
    </source>
</evidence>
<evidence type="ECO:0000269" key="10">
    <source>
    </source>
</evidence>
<evidence type="ECO:0000269" key="11">
    <source>
    </source>
</evidence>
<evidence type="ECO:0000269" key="12">
    <source>
    </source>
</evidence>
<evidence type="ECO:0000269" key="13">
    <source>
    </source>
</evidence>
<evidence type="ECO:0000303" key="14">
    <source>
    </source>
</evidence>
<evidence type="ECO:0000303" key="15">
    <source>
    </source>
</evidence>
<evidence type="ECO:0000303" key="16">
    <source>
    </source>
</evidence>
<evidence type="ECO:0000305" key="17"/>
<evidence type="ECO:0007744" key="18">
    <source>
    </source>
</evidence>
<evidence type="ECO:0007744" key="19">
    <source>
    </source>
</evidence>
<evidence type="ECO:0007829" key="20">
    <source>
        <dbReference type="PDB" id="2LQR"/>
    </source>
</evidence>
<proteinExistence type="evidence at protein level"/>
<gene>
    <name type="primary">Palld</name>
    <name type="synonym">Kiaa0992</name>
</gene>
<dbReference type="EMBL" id="AC121881">
    <property type="status" value="NOT_ANNOTATED_CDS"/>
    <property type="molecule type" value="Genomic_DNA"/>
</dbReference>
<dbReference type="EMBL" id="AC139846">
    <property type="status" value="NOT_ANNOTATED_CDS"/>
    <property type="molecule type" value="Genomic_DNA"/>
</dbReference>
<dbReference type="EMBL" id="AC147616">
    <property type="status" value="NOT_ANNOTATED_CDS"/>
    <property type="molecule type" value="Genomic_DNA"/>
</dbReference>
<dbReference type="EMBL" id="BC076588">
    <property type="protein sequence ID" value="AAH76588.1"/>
    <property type="molecule type" value="mRNA"/>
</dbReference>
<dbReference type="EMBL" id="BC127081">
    <property type="protein sequence ID" value="AAI27082.1"/>
    <property type="molecule type" value="mRNA"/>
</dbReference>
<dbReference type="EMBL" id="AK173081">
    <property type="protein sequence ID" value="BAD32359.1"/>
    <property type="molecule type" value="mRNA"/>
</dbReference>
<dbReference type="EMBL" id="AF205078">
    <property type="protein sequence ID" value="AAG00078.1"/>
    <property type="molecule type" value="mRNA"/>
</dbReference>
<dbReference type="EMBL" id="AK010350">
    <property type="protein sequence ID" value="BAB26871.1"/>
    <property type="status" value="ALT_INIT"/>
    <property type="molecule type" value="mRNA"/>
</dbReference>
<dbReference type="EMBL" id="AK031696">
    <property type="status" value="NOT_ANNOTATED_CDS"/>
    <property type="molecule type" value="mRNA"/>
</dbReference>
<dbReference type="CCDS" id="CCDS40350.1">
    <molecule id="Q9ET54-2"/>
</dbReference>
<dbReference type="CCDS" id="CCDS80880.1">
    <molecule id="Q9ET54-3"/>
</dbReference>
<dbReference type="CCDS" id="CCDS80881.1">
    <molecule id="Q9ET54-4"/>
</dbReference>
<dbReference type="CCDS" id="CCDS80882.1">
    <molecule id="Q9ET54-1"/>
</dbReference>
<dbReference type="RefSeq" id="NP_001074859.1">
    <molecule id="Q9ET54-2"/>
    <property type="nucleotide sequence ID" value="NM_001081390.2"/>
</dbReference>
<dbReference type="RefSeq" id="NP_001280701.1">
    <molecule id="Q9ET54-1"/>
    <property type="nucleotide sequence ID" value="NM_001293772.2"/>
</dbReference>
<dbReference type="RefSeq" id="NP_001280702.1">
    <molecule id="Q9ET54-4"/>
    <property type="nucleotide sequence ID" value="NM_001293773.2"/>
</dbReference>
<dbReference type="RefSeq" id="NP_001280703.1">
    <molecule id="Q9ET54-3"/>
    <property type="nucleotide sequence ID" value="NM_001293774.2"/>
</dbReference>
<dbReference type="RefSeq" id="XP_006509566.1">
    <molecule id="Q9ET54-6"/>
    <property type="nucleotide sequence ID" value="XM_006509503.3"/>
</dbReference>
<dbReference type="RefSeq" id="XP_011240544.1">
    <molecule id="Q9ET54-1"/>
    <property type="nucleotide sequence ID" value="XM_011242242.3"/>
</dbReference>
<dbReference type="RefSeq" id="XP_036010201.1">
    <molecule id="Q9ET54-3"/>
    <property type="nucleotide sequence ID" value="XM_036154308.1"/>
</dbReference>
<dbReference type="PDB" id="2LQR">
    <property type="method" value="NMR"/>
    <property type="chains" value="A=1022-1126"/>
</dbReference>
<dbReference type="PDBsum" id="2LQR"/>
<dbReference type="SASBDB" id="Q9ET54"/>
<dbReference type="SMR" id="Q9ET54"/>
<dbReference type="BioGRID" id="215316">
    <property type="interactions" value="7"/>
</dbReference>
<dbReference type="FunCoup" id="Q9ET54">
    <property type="interactions" value="602"/>
</dbReference>
<dbReference type="IntAct" id="Q9ET54">
    <property type="interactions" value="2"/>
</dbReference>
<dbReference type="STRING" id="10090.ENSMUSP00000112442"/>
<dbReference type="GlyGen" id="Q9ET54">
    <property type="glycosylation" value="5 sites, 1 N-linked glycan (1 site), 1 O-linked glycan (3 sites)"/>
</dbReference>
<dbReference type="iPTMnet" id="Q9ET54"/>
<dbReference type="PhosphoSitePlus" id="Q9ET54"/>
<dbReference type="jPOST" id="Q9ET54"/>
<dbReference type="PaxDb" id="10090-ENSMUSP00000112442"/>
<dbReference type="PeptideAtlas" id="Q9ET54"/>
<dbReference type="ProteomicsDB" id="293998">
    <molecule id="Q9ET54-1"/>
</dbReference>
<dbReference type="ProteomicsDB" id="293999">
    <molecule id="Q9ET54-2"/>
</dbReference>
<dbReference type="ProteomicsDB" id="294000">
    <molecule id="Q9ET54-3"/>
</dbReference>
<dbReference type="ProteomicsDB" id="294001">
    <molecule id="Q9ET54-4"/>
</dbReference>
<dbReference type="ProteomicsDB" id="294002">
    <molecule id="Q9ET54-5"/>
</dbReference>
<dbReference type="ProteomicsDB" id="294003">
    <molecule id="Q9ET54-6"/>
</dbReference>
<dbReference type="Pumba" id="Q9ET54"/>
<dbReference type="Antibodypedia" id="28415">
    <property type="antibodies" value="320 antibodies from 36 providers"/>
</dbReference>
<dbReference type="DNASU" id="72333"/>
<dbReference type="Ensembl" id="ENSMUST00000034057.14">
    <molecule id="Q9ET54-2"/>
    <property type="protein sequence ID" value="ENSMUSP00000034057.8"/>
    <property type="gene ID" value="ENSMUSG00000058056.17"/>
</dbReference>
<dbReference type="Ensembl" id="ENSMUST00000121200.9">
    <molecule id="Q9ET54-3"/>
    <property type="protein sequence ID" value="ENSMUSP00000112374.2"/>
    <property type="gene ID" value="ENSMUSG00000058056.17"/>
</dbReference>
<dbReference type="Ensembl" id="ENSMUST00000121493.9">
    <molecule id="Q9ET54-4"/>
    <property type="protein sequence ID" value="ENSMUSP00000113874.2"/>
    <property type="gene ID" value="ENSMUSG00000058056.17"/>
</dbReference>
<dbReference type="Ensembl" id="ENSMUST00000121785.9">
    <molecule id="Q9ET54-1"/>
    <property type="protein sequence ID" value="ENSMUSP00000112442.2"/>
    <property type="gene ID" value="ENSMUSG00000058056.17"/>
</dbReference>
<dbReference type="GeneID" id="72333"/>
<dbReference type="KEGG" id="mmu:72333"/>
<dbReference type="UCSC" id="uc009lud.3">
    <molecule id="Q9ET54-3"/>
    <property type="organism name" value="mouse"/>
</dbReference>
<dbReference type="UCSC" id="uc009lue.3">
    <molecule id="Q9ET54-4"/>
    <property type="organism name" value="mouse"/>
</dbReference>
<dbReference type="UCSC" id="uc009luf.3">
    <molecule id="Q9ET54-1"/>
    <property type="organism name" value="mouse"/>
</dbReference>
<dbReference type="UCSC" id="uc009lug.3">
    <molecule id="Q9ET54-2"/>
    <property type="organism name" value="mouse"/>
</dbReference>
<dbReference type="AGR" id="MGI:1919583"/>
<dbReference type="CTD" id="23022"/>
<dbReference type="MGI" id="MGI:1919583">
    <property type="gene designation" value="Palld"/>
</dbReference>
<dbReference type="VEuPathDB" id="HostDB:ENSMUSG00000058056"/>
<dbReference type="eggNOG" id="ENOG502QSRV">
    <property type="taxonomic scope" value="Eukaryota"/>
</dbReference>
<dbReference type="GeneTree" id="ENSGT00940000153441"/>
<dbReference type="HOGENOM" id="CLU_006487_2_0_1"/>
<dbReference type="InParanoid" id="Q9ET54"/>
<dbReference type="OMA" id="XPRSRSR"/>
<dbReference type="OrthoDB" id="6612025at2759"/>
<dbReference type="PhylomeDB" id="Q9ET54"/>
<dbReference type="TreeFam" id="TF343193"/>
<dbReference type="BioGRID-ORCS" id="72333">
    <property type="hits" value="5 hits in 76 CRISPR screens"/>
</dbReference>
<dbReference type="ChiTaRS" id="Palld">
    <property type="organism name" value="mouse"/>
</dbReference>
<dbReference type="EvolutionaryTrace" id="Q9ET54"/>
<dbReference type="PRO" id="PR:Q9ET54"/>
<dbReference type="Proteomes" id="UP000000589">
    <property type="component" value="Chromosome 8"/>
</dbReference>
<dbReference type="RNAct" id="Q9ET54">
    <property type="molecule type" value="protein"/>
</dbReference>
<dbReference type="Bgee" id="ENSMUSG00000058056">
    <property type="expression patterns" value="Expressed in umbilical cord and 249 other cell types or tissues"/>
</dbReference>
<dbReference type="ExpressionAtlas" id="Q9ET54">
    <property type="expression patterns" value="baseline and differential"/>
</dbReference>
<dbReference type="GO" id="GO:0005884">
    <property type="term" value="C:actin filament"/>
    <property type="evidence" value="ECO:0000250"/>
    <property type="project" value="HGNC-UCL"/>
</dbReference>
<dbReference type="GO" id="GO:0005856">
    <property type="term" value="C:cytoskeleton"/>
    <property type="evidence" value="ECO:0000314"/>
    <property type="project" value="UniProtKB"/>
</dbReference>
<dbReference type="GO" id="GO:0005829">
    <property type="term" value="C:cytosol"/>
    <property type="evidence" value="ECO:0007669"/>
    <property type="project" value="Ensembl"/>
</dbReference>
<dbReference type="GO" id="GO:0060076">
    <property type="term" value="C:excitatory synapse"/>
    <property type="evidence" value="ECO:0000250"/>
    <property type="project" value="UniProtKB"/>
</dbReference>
<dbReference type="GO" id="GO:0005925">
    <property type="term" value="C:focal adhesion"/>
    <property type="evidence" value="ECO:0000314"/>
    <property type="project" value="UniProtKB"/>
</dbReference>
<dbReference type="GO" id="GO:0030426">
    <property type="term" value="C:growth cone"/>
    <property type="evidence" value="ECO:0007669"/>
    <property type="project" value="UniProtKB-SubCell"/>
</dbReference>
<dbReference type="GO" id="GO:0030027">
    <property type="term" value="C:lamellipodium"/>
    <property type="evidence" value="ECO:0007669"/>
    <property type="project" value="UniProtKB-SubCell"/>
</dbReference>
<dbReference type="GO" id="GO:0005739">
    <property type="term" value="C:mitochondrion"/>
    <property type="evidence" value="ECO:0007669"/>
    <property type="project" value="Ensembl"/>
</dbReference>
<dbReference type="GO" id="GO:0005634">
    <property type="term" value="C:nucleus"/>
    <property type="evidence" value="ECO:0000250"/>
    <property type="project" value="HGNC-UCL"/>
</dbReference>
<dbReference type="GO" id="GO:0005886">
    <property type="term" value="C:plasma membrane"/>
    <property type="evidence" value="ECO:0007669"/>
    <property type="project" value="Ensembl"/>
</dbReference>
<dbReference type="GO" id="GO:0002102">
    <property type="term" value="C:podosome"/>
    <property type="evidence" value="ECO:0007669"/>
    <property type="project" value="UniProtKB-SubCell"/>
</dbReference>
<dbReference type="GO" id="GO:0001726">
    <property type="term" value="C:ruffle"/>
    <property type="evidence" value="ECO:0007669"/>
    <property type="project" value="UniProtKB-SubCell"/>
</dbReference>
<dbReference type="GO" id="GO:0001725">
    <property type="term" value="C:stress fiber"/>
    <property type="evidence" value="ECO:0000314"/>
    <property type="project" value="UniProtKB"/>
</dbReference>
<dbReference type="GO" id="GO:0030018">
    <property type="term" value="C:Z disc"/>
    <property type="evidence" value="ECO:0000314"/>
    <property type="project" value="UniProtKB"/>
</dbReference>
<dbReference type="GO" id="GO:0003779">
    <property type="term" value="F:actin binding"/>
    <property type="evidence" value="ECO:0007669"/>
    <property type="project" value="UniProtKB-KW"/>
</dbReference>
<dbReference type="GO" id="GO:0030036">
    <property type="term" value="P:actin cytoskeleton organization"/>
    <property type="evidence" value="ECO:0000315"/>
    <property type="project" value="MGI"/>
</dbReference>
<dbReference type="GO" id="GO:0016477">
    <property type="term" value="P:cell migration"/>
    <property type="evidence" value="ECO:0007669"/>
    <property type="project" value="InterPro"/>
</dbReference>
<dbReference type="GO" id="GO:0003382">
    <property type="term" value="P:epithelial cell morphogenesis"/>
    <property type="evidence" value="ECO:0000315"/>
    <property type="project" value="MGI"/>
</dbReference>
<dbReference type="GO" id="GO:0003334">
    <property type="term" value="P:keratinocyte development"/>
    <property type="evidence" value="ECO:0000315"/>
    <property type="project" value="MGI"/>
</dbReference>
<dbReference type="CDD" id="cd05893">
    <property type="entry name" value="IgI_1_Palladin_C"/>
    <property type="match status" value="1"/>
</dbReference>
<dbReference type="CDD" id="cd20972">
    <property type="entry name" value="IgI_2_Titin_Z1z2-like"/>
    <property type="match status" value="1"/>
</dbReference>
<dbReference type="CDD" id="cd05892">
    <property type="entry name" value="IgI_Myotilin_C"/>
    <property type="match status" value="1"/>
</dbReference>
<dbReference type="FunFam" id="2.60.40.10:FF:000256">
    <property type="entry name" value="myopalladin isoform X1"/>
    <property type="match status" value="1"/>
</dbReference>
<dbReference type="FunFam" id="2.60.40.10:FF:000399">
    <property type="entry name" value="myopalladin isoform X1"/>
    <property type="match status" value="1"/>
</dbReference>
<dbReference type="FunFam" id="2.60.40.10:FF:001560">
    <property type="entry name" value="palladin isoform X1"/>
    <property type="match status" value="1"/>
</dbReference>
<dbReference type="FunFam" id="2.60.40.10:FF:000761">
    <property type="entry name" value="palladin isoform X2"/>
    <property type="match status" value="1"/>
</dbReference>
<dbReference type="FunFam" id="2.60.40.10:FF:001108">
    <property type="entry name" value="palladin isoform X2"/>
    <property type="match status" value="1"/>
</dbReference>
<dbReference type="Gene3D" id="2.60.40.10">
    <property type="entry name" value="Immunoglobulins"/>
    <property type="match status" value="5"/>
</dbReference>
<dbReference type="InterPro" id="IPR007110">
    <property type="entry name" value="Ig-like_dom"/>
</dbReference>
<dbReference type="InterPro" id="IPR036179">
    <property type="entry name" value="Ig-like_dom_sf"/>
</dbReference>
<dbReference type="InterPro" id="IPR013783">
    <property type="entry name" value="Ig-like_fold"/>
</dbReference>
<dbReference type="InterPro" id="IPR013098">
    <property type="entry name" value="Ig_I-set"/>
</dbReference>
<dbReference type="InterPro" id="IPR003599">
    <property type="entry name" value="Ig_sub"/>
</dbReference>
<dbReference type="InterPro" id="IPR003598">
    <property type="entry name" value="Ig_sub2"/>
</dbReference>
<dbReference type="InterPro" id="IPR033017">
    <property type="entry name" value="Palladin_C"/>
</dbReference>
<dbReference type="PANTHER" id="PTHR47633:SF16">
    <property type="entry name" value="CAVP-TARGET PROTEIN-LIKE"/>
    <property type="match status" value="1"/>
</dbReference>
<dbReference type="PANTHER" id="PTHR47633">
    <property type="entry name" value="IMMUNOGLOBULIN"/>
    <property type="match status" value="1"/>
</dbReference>
<dbReference type="Pfam" id="PF07679">
    <property type="entry name" value="I-set"/>
    <property type="match status" value="5"/>
</dbReference>
<dbReference type="SMART" id="SM00409">
    <property type="entry name" value="IG"/>
    <property type="match status" value="5"/>
</dbReference>
<dbReference type="SMART" id="SM00408">
    <property type="entry name" value="IGc2"/>
    <property type="match status" value="5"/>
</dbReference>
<dbReference type="SUPFAM" id="SSF48726">
    <property type="entry name" value="Immunoglobulin"/>
    <property type="match status" value="5"/>
</dbReference>
<dbReference type="PROSITE" id="PS50835">
    <property type="entry name" value="IG_LIKE"/>
    <property type="match status" value="5"/>
</dbReference>